<protein>
    <recommendedName>
        <fullName evidence="1">N-acetylmuramic acid 6-phosphate etherase</fullName>
        <shortName evidence="1">MurNAc-6-P etherase</shortName>
        <ecNumber evidence="1">4.2.1.126</ecNumber>
    </recommendedName>
    <alternativeName>
        <fullName evidence="1">N-acetylmuramic acid 6-phosphate hydrolase</fullName>
    </alternativeName>
    <alternativeName>
        <fullName evidence="1">N-acetylmuramic acid 6-phosphate lyase</fullName>
    </alternativeName>
</protein>
<reference key="1">
    <citation type="journal article" date="2012" name="BMC Genomics">
        <title>Comparative genomics and transcriptomics of lineages I, II, and III strains of Listeria monocytogenes.</title>
        <authorList>
            <person name="Hain T."/>
            <person name="Ghai R."/>
            <person name="Billion A."/>
            <person name="Kuenne C.T."/>
            <person name="Steinweg C."/>
            <person name="Izar B."/>
            <person name="Mohamed W."/>
            <person name="Mraheil M."/>
            <person name="Domann E."/>
            <person name="Schaffrath S."/>
            <person name="Karst U."/>
            <person name="Goesmann A."/>
            <person name="Oehm S."/>
            <person name="Puhler A."/>
            <person name="Merkl R."/>
            <person name="Vorwerk S."/>
            <person name="Glaser P."/>
            <person name="Garrido P."/>
            <person name="Rusniok C."/>
            <person name="Buchrieser C."/>
            <person name="Goebel W."/>
            <person name="Chakraborty T."/>
        </authorList>
    </citation>
    <scope>NUCLEOTIDE SEQUENCE [LARGE SCALE GENOMIC DNA]</scope>
    <source>
        <strain>CLIP80459</strain>
    </source>
</reference>
<keyword id="KW-0119">Carbohydrate metabolism</keyword>
<keyword id="KW-0456">Lyase</keyword>
<dbReference type="EC" id="4.2.1.126" evidence="1"/>
<dbReference type="EMBL" id="FM242711">
    <property type="protein sequence ID" value="CAS05432.1"/>
    <property type="molecule type" value="Genomic_DNA"/>
</dbReference>
<dbReference type="RefSeq" id="WP_003726267.1">
    <property type="nucleotide sequence ID" value="NC_012488.1"/>
</dbReference>
<dbReference type="SMR" id="C1KVV7"/>
<dbReference type="KEGG" id="lmc:Lm4b_01671"/>
<dbReference type="HOGENOM" id="CLU_049049_1_1_9"/>
<dbReference type="UniPathway" id="UPA00342"/>
<dbReference type="GO" id="GO:0097367">
    <property type="term" value="F:carbohydrate derivative binding"/>
    <property type="evidence" value="ECO:0007669"/>
    <property type="project" value="InterPro"/>
</dbReference>
<dbReference type="GO" id="GO:0016835">
    <property type="term" value="F:carbon-oxygen lyase activity"/>
    <property type="evidence" value="ECO:0007669"/>
    <property type="project" value="UniProtKB-UniRule"/>
</dbReference>
<dbReference type="GO" id="GO:0016803">
    <property type="term" value="F:ether hydrolase activity"/>
    <property type="evidence" value="ECO:0007669"/>
    <property type="project" value="TreeGrafter"/>
</dbReference>
<dbReference type="GO" id="GO:0046348">
    <property type="term" value="P:amino sugar catabolic process"/>
    <property type="evidence" value="ECO:0007669"/>
    <property type="project" value="InterPro"/>
</dbReference>
<dbReference type="GO" id="GO:0097173">
    <property type="term" value="P:N-acetylmuramic acid catabolic process"/>
    <property type="evidence" value="ECO:0007669"/>
    <property type="project" value="UniProtKB-UniPathway"/>
</dbReference>
<dbReference type="GO" id="GO:0009254">
    <property type="term" value="P:peptidoglycan turnover"/>
    <property type="evidence" value="ECO:0007669"/>
    <property type="project" value="TreeGrafter"/>
</dbReference>
<dbReference type="CDD" id="cd05007">
    <property type="entry name" value="SIS_Etherase"/>
    <property type="match status" value="1"/>
</dbReference>
<dbReference type="FunFam" id="1.10.8.1080:FF:000001">
    <property type="entry name" value="N-acetylmuramic acid 6-phosphate etherase"/>
    <property type="match status" value="1"/>
</dbReference>
<dbReference type="FunFam" id="3.40.50.10490:FF:000014">
    <property type="entry name" value="N-acetylmuramic acid 6-phosphate etherase"/>
    <property type="match status" value="1"/>
</dbReference>
<dbReference type="Gene3D" id="1.10.8.1080">
    <property type="match status" value="1"/>
</dbReference>
<dbReference type="Gene3D" id="3.40.50.10490">
    <property type="entry name" value="Glucose-6-phosphate isomerase like protein, domain 1"/>
    <property type="match status" value="1"/>
</dbReference>
<dbReference type="HAMAP" id="MF_00068">
    <property type="entry name" value="MurQ"/>
    <property type="match status" value="1"/>
</dbReference>
<dbReference type="InterPro" id="IPR005488">
    <property type="entry name" value="Etherase_MurQ"/>
</dbReference>
<dbReference type="InterPro" id="IPR005486">
    <property type="entry name" value="Glucokinase_regulatory_CS"/>
</dbReference>
<dbReference type="InterPro" id="IPR040190">
    <property type="entry name" value="MURQ/GCKR"/>
</dbReference>
<dbReference type="InterPro" id="IPR001347">
    <property type="entry name" value="SIS_dom"/>
</dbReference>
<dbReference type="InterPro" id="IPR046348">
    <property type="entry name" value="SIS_dom_sf"/>
</dbReference>
<dbReference type="NCBIfam" id="TIGR00274">
    <property type="entry name" value="N-acetylmuramic acid 6-phosphate etherase"/>
    <property type="match status" value="1"/>
</dbReference>
<dbReference type="NCBIfam" id="NF003915">
    <property type="entry name" value="PRK05441.1"/>
    <property type="match status" value="1"/>
</dbReference>
<dbReference type="NCBIfam" id="NF009222">
    <property type="entry name" value="PRK12570.1"/>
    <property type="match status" value="1"/>
</dbReference>
<dbReference type="PANTHER" id="PTHR10088">
    <property type="entry name" value="GLUCOKINASE REGULATORY PROTEIN"/>
    <property type="match status" value="1"/>
</dbReference>
<dbReference type="PANTHER" id="PTHR10088:SF4">
    <property type="entry name" value="GLUCOKINASE REGULATORY PROTEIN"/>
    <property type="match status" value="1"/>
</dbReference>
<dbReference type="Pfam" id="PF22645">
    <property type="entry name" value="GKRP_SIS_N"/>
    <property type="match status" value="1"/>
</dbReference>
<dbReference type="SUPFAM" id="SSF53697">
    <property type="entry name" value="SIS domain"/>
    <property type="match status" value="1"/>
</dbReference>
<dbReference type="PROSITE" id="PS01272">
    <property type="entry name" value="GCKR"/>
    <property type="match status" value="1"/>
</dbReference>
<dbReference type="PROSITE" id="PS51464">
    <property type="entry name" value="SIS"/>
    <property type="match status" value="1"/>
</dbReference>
<feature type="chain" id="PRO_1000202431" description="N-acetylmuramic acid 6-phosphate etherase">
    <location>
        <begin position="1"/>
        <end position="296"/>
    </location>
</feature>
<feature type="domain" description="SIS" evidence="1">
    <location>
        <begin position="54"/>
        <end position="217"/>
    </location>
</feature>
<feature type="active site" description="Proton donor" evidence="1">
    <location>
        <position position="82"/>
    </location>
</feature>
<feature type="active site" evidence="1">
    <location>
        <position position="113"/>
    </location>
</feature>
<proteinExistence type="inferred from homology"/>
<accession>C1KVV7</accession>
<evidence type="ECO:0000255" key="1">
    <source>
        <dbReference type="HAMAP-Rule" id="MF_00068"/>
    </source>
</evidence>
<comment type="function">
    <text evidence="1">Specifically catalyzes the cleavage of the D-lactyl ether substituent of MurNAc 6-phosphate, producing GlcNAc 6-phosphate and D-lactate.</text>
</comment>
<comment type="catalytic activity">
    <reaction evidence="1">
        <text>N-acetyl-D-muramate 6-phosphate + H2O = N-acetyl-D-glucosamine 6-phosphate + (R)-lactate</text>
        <dbReference type="Rhea" id="RHEA:26410"/>
        <dbReference type="ChEBI" id="CHEBI:15377"/>
        <dbReference type="ChEBI" id="CHEBI:16004"/>
        <dbReference type="ChEBI" id="CHEBI:57513"/>
        <dbReference type="ChEBI" id="CHEBI:58722"/>
        <dbReference type="EC" id="4.2.1.126"/>
    </reaction>
</comment>
<comment type="pathway">
    <text evidence="1">Amino-sugar metabolism; N-acetylmuramate degradation.</text>
</comment>
<comment type="subunit">
    <text evidence="1">Homodimer.</text>
</comment>
<comment type="miscellaneous">
    <text evidence="1">A lyase-type mechanism (elimination/hydration) is suggested for the cleavage of the lactyl ether bond of MurNAc 6-phosphate, with the formation of an alpha,beta-unsaturated aldehyde intermediate with (E)-stereochemistry, followed by the syn addition of water to give product.</text>
</comment>
<comment type="similarity">
    <text evidence="1">Belongs to the GCKR-like family. MurNAc-6-P etherase subfamily.</text>
</comment>
<gene>
    <name evidence="1" type="primary">murQ</name>
    <name type="ordered locus">Lm4b_01671</name>
</gene>
<sequence>MLENLATEERNEKTIDLDTLSPKEILAVMNEEDLTVPIAIKKVLPQIELIVSGVISCFQKGGRLIYLGAGTSGRLGVLDAAECVPTFGVSKEQVIGLIAGGEKAFVAAIEGAEDSKILGENDLKQIKLTANDFVIGIAASGRTPYVIGALDYAKSVGAKTGAISCNANAKISAHADIAVEVVTGAEILTGSTRLKAGTAQKLVLNMISTASMVGIGKVYKNLMVDVLPTNKKLEERSKRIIMEATEADYETANKFYEAAEKHVKVAIVMILTNSTKEIALEKLSEAKGFVRNTIQK</sequence>
<organism>
    <name type="scientific">Listeria monocytogenes serotype 4b (strain CLIP80459)</name>
    <dbReference type="NCBI Taxonomy" id="568819"/>
    <lineage>
        <taxon>Bacteria</taxon>
        <taxon>Bacillati</taxon>
        <taxon>Bacillota</taxon>
        <taxon>Bacilli</taxon>
        <taxon>Bacillales</taxon>
        <taxon>Listeriaceae</taxon>
        <taxon>Listeria</taxon>
    </lineage>
</organism>
<name>MURQ_LISMC</name>